<feature type="chain" id="PRO_0000159506" description="Cysteine--tRNA ligase">
    <location>
        <begin position="1"/>
        <end position="460"/>
    </location>
</feature>
<feature type="short sequence motif" description="'HIGH' region">
    <location>
        <begin position="29"/>
        <end position="39"/>
    </location>
</feature>
<feature type="short sequence motif" description="'KMSKS' region">
    <location>
        <begin position="264"/>
        <end position="268"/>
    </location>
</feature>
<feature type="binding site" evidence="1">
    <location>
        <position position="27"/>
    </location>
    <ligand>
        <name>Zn(2+)</name>
        <dbReference type="ChEBI" id="CHEBI:29105"/>
    </ligand>
</feature>
<feature type="binding site" evidence="1">
    <location>
        <position position="207"/>
    </location>
    <ligand>
        <name>Zn(2+)</name>
        <dbReference type="ChEBI" id="CHEBI:29105"/>
    </ligand>
</feature>
<feature type="binding site" evidence="1">
    <location>
        <position position="232"/>
    </location>
    <ligand>
        <name>Zn(2+)</name>
        <dbReference type="ChEBI" id="CHEBI:29105"/>
    </ligand>
</feature>
<feature type="binding site" evidence="1">
    <location>
        <position position="236"/>
    </location>
    <ligand>
        <name>Zn(2+)</name>
        <dbReference type="ChEBI" id="CHEBI:29105"/>
    </ligand>
</feature>
<feature type="binding site" evidence="1">
    <location>
        <position position="267"/>
    </location>
    <ligand>
        <name>ATP</name>
        <dbReference type="ChEBI" id="CHEBI:30616"/>
    </ligand>
</feature>
<gene>
    <name type="primary">cysS</name>
    <name type="ordered locus">TM_0719</name>
</gene>
<dbReference type="EC" id="6.1.1.16"/>
<dbReference type="EMBL" id="AE000512">
    <property type="protein sequence ID" value="AAD35801.1"/>
    <property type="molecule type" value="Genomic_DNA"/>
</dbReference>
<dbReference type="PIR" id="E72341">
    <property type="entry name" value="E72341"/>
</dbReference>
<dbReference type="RefSeq" id="NP_228528.1">
    <property type="nucleotide sequence ID" value="NC_000853.1"/>
</dbReference>
<dbReference type="RefSeq" id="WP_004081016.1">
    <property type="nucleotide sequence ID" value="NZ_CP011107.1"/>
</dbReference>
<dbReference type="SMR" id="Q9WZH8"/>
<dbReference type="FunCoup" id="Q9WZH8">
    <property type="interactions" value="314"/>
</dbReference>
<dbReference type="STRING" id="243274.TM_0719"/>
<dbReference type="PaxDb" id="243274-THEMA_01065"/>
<dbReference type="EnsemblBacteria" id="AAD35801">
    <property type="protein sequence ID" value="AAD35801"/>
    <property type="gene ID" value="TM_0719"/>
</dbReference>
<dbReference type="KEGG" id="tma:TM0719"/>
<dbReference type="KEGG" id="tmi:THEMA_01065"/>
<dbReference type="KEGG" id="tmm:Tmari_0720"/>
<dbReference type="KEGG" id="tmw:THMA_0735"/>
<dbReference type="eggNOG" id="COG0215">
    <property type="taxonomic scope" value="Bacteria"/>
</dbReference>
<dbReference type="InParanoid" id="Q9WZH8"/>
<dbReference type="OrthoDB" id="9815130at2"/>
<dbReference type="Proteomes" id="UP000008183">
    <property type="component" value="Chromosome"/>
</dbReference>
<dbReference type="GO" id="GO:0005737">
    <property type="term" value="C:cytoplasm"/>
    <property type="evidence" value="ECO:0000318"/>
    <property type="project" value="GO_Central"/>
</dbReference>
<dbReference type="GO" id="GO:0005829">
    <property type="term" value="C:cytosol"/>
    <property type="evidence" value="ECO:0000318"/>
    <property type="project" value="GO_Central"/>
</dbReference>
<dbReference type="GO" id="GO:0005524">
    <property type="term" value="F:ATP binding"/>
    <property type="evidence" value="ECO:0000318"/>
    <property type="project" value="GO_Central"/>
</dbReference>
<dbReference type="GO" id="GO:0004817">
    <property type="term" value="F:cysteine-tRNA ligase activity"/>
    <property type="evidence" value="ECO:0000318"/>
    <property type="project" value="GO_Central"/>
</dbReference>
<dbReference type="GO" id="GO:0008270">
    <property type="term" value="F:zinc ion binding"/>
    <property type="evidence" value="ECO:0007669"/>
    <property type="project" value="UniProtKB-UniRule"/>
</dbReference>
<dbReference type="GO" id="GO:0006423">
    <property type="term" value="P:cysteinyl-tRNA aminoacylation"/>
    <property type="evidence" value="ECO:0000318"/>
    <property type="project" value="GO_Central"/>
</dbReference>
<dbReference type="CDD" id="cd00672">
    <property type="entry name" value="CysRS_core"/>
    <property type="match status" value="1"/>
</dbReference>
<dbReference type="FunFam" id="3.40.50.620:FF:000068">
    <property type="entry name" value="Cysteine--tRNA ligase"/>
    <property type="match status" value="1"/>
</dbReference>
<dbReference type="Gene3D" id="1.20.120.1910">
    <property type="entry name" value="Cysteine-tRNA ligase, C-terminal anti-codon recognition domain"/>
    <property type="match status" value="1"/>
</dbReference>
<dbReference type="Gene3D" id="3.40.50.620">
    <property type="entry name" value="HUPs"/>
    <property type="match status" value="1"/>
</dbReference>
<dbReference type="HAMAP" id="MF_00041">
    <property type="entry name" value="Cys_tRNA_synth"/>
    <property type="match status" value="1"/>
</dbReference>
<dbReference type="InterPro" id="IPR015803">
    <property type="entry name" value="Cys-tRNA-ligase"/>
</dbReference>
<dbReference type="InterPro" id="IPR015273">
    <property type="entry name" value="Cys-tRNA-synt_Ia_DALR"/>
</dbReference>
<dbReference type="InterPro" id="IPR024909">
    <property type="entry name" value="Cys-tRNA/MSH_ligase"/>
</dbReference>
<dbReference type="InterPro" id="IPR014729">
    <property type="entry name" value="Rossmann-like_a/b/a_fold"/>
</dbReference>
<dbReference type="InterPro" id="IPR032678">
    <property type="entry name" value="tRNA-synt_1_cat_dom"/>
</dbReference>
<dbReference type="InterPro" id="IPR009080">
    <property type="entry name" value="tRNAsynth_Ia_anticodon-bd"/>
</dbReference>
<dbReference type="NCBIfam" id="TIGR00435">
    <property type="entry name" value="cysS"/>
    <property type="match status" value="1"/>
</dbReference>
<dbReference type="PANTHER" id="PTHR10890:SF3">
    <property type="entry name" value="CYSTEINE--TRNA LIGASE, CYTOPLASMIC"/>
    <property type="match status" value="1"/>
</dbReference>
<dbReference type="PANTHER" id="PTHR10890">
    <property type="entry name" value="CYSTEINYL-TRNA SYNTHETASE"/>
    <property type="match status" value="1"/>
</dbReference>
<dbReference type="Pfam" id="PF09190">
    <property type="entry name" value="DALR_2"/>
    <property type="match status" value="1"/>
</dbReference>
<dbReference type="Pfam" id="PF01406">
    <property type="entry name" value="tRNA-synt_1e"/>
    <property type="match status" value="1"/>
</dbReference>
<dbReference type="PRINTS" id="PR00983">
    <property type="entry name" value="TRNASYNTHCYS"/>
</dbReference>
<dbReference type="SMART" id="SM00840">
    <property type="entry name" value="DALR_2"/>
    <property type="match status" value="1"/>
</dbReference>
<dbReference type="SUPFAM" id="SSF47323">
    <property type="entry name" value="Anticodon-binding domain of a subclass of class I aminoacyl-tRNA synthetases"/>
    <property type="match status" value="1"/>
</dbReference>
<dbReference type="SUPFAM" id="SSF52374">
    <property type="entry name" value="Nucleotidylyl transferase"/>
    <property type="match status" value="1"/>
</dbReference>
<sequence length="460" mass="53418">MRITNTLTGKKEEFVPIQPGVVRMYVCGPTVYDLIHVGNARPALVFDVFRRYLEYRGYRVIMVQNFTDIDDKIINKANQLGVDYKTVADTFIAEYWRDAHALGIRPANFHPRTTDFVEDIVEIIEKLVEKGFAYQTETGVYFDVRKFEKYGELSKKKIEDLIAGARVEVDETKKSPLDFSLWKKAKPGEPCWKSPWGEGRPGWHIECTVMSVKILGESFDIHAGGEDLVFPHHENEKAQAEALTGKVFARYWMHNGMVRFLGDKMSKSTGNIFTVREAVKRYGRDGLRYMILSKHYRSPMDFSEELLQDYSRAVKRVWEILGRYEKSGDIGIPKRNAVYEEYVNRFVEALDDDFNTPVAVSLIFELARNLSKAMDDNDREDALLYYHLIRREFGPVLGLFDLNEEKKEVSSEELLKLLIEVRDVLRKEKRYDLSDRIRDRLREIGIILKDTPSGTEYTVE</sequence>
<accession>Q9WZH8</accession>
<comment type="catalytic activity">
    <reaction>
        <text>tRNA(Cys) + L-cysteine + ATP = L-cysteinyl-tRNA(Cys) + AMP + diphosphate</text>
        <dbReference type="Rhea" id="RHEA:17773"/>
        <dbReference type="Rhea" id="RHEA-COMP:9661"/>
        <dbReference type="Rhea" id="RHEA-COMP:9679"/>
        <dbReference type="ChEBI" id="CHEBI:30616"/>
        <dbReference type="ChEBI" id="CHEBI:33019"/>
        <dbReference type="ChEBI" id="CHEBI:35235"/>
        <dbReference type="ChEBI" id="CHEBI:78442"/>
        <dbReference type="ChEBI" id="CHEBI:78517"/>
        <dbReference type="ChEBI" id="CHEBI:456215"/>
        <dbReference type="EC" id="6.1.1.16"/>
    </reaction>
</comment>
<comment type="cofactor">
    <cofactor evidence="1">
        <name>Zn(2+)</name>
        <dbReference type="ChEBI" id="CHEBI:29105"/>
    </cofactor>
    <text evidence="1">Binds 1 zinc ion per subunit.</text>
</comment>
<comment type="subunit">
    <text evidence="1">Monomer.</text>
</comment>
<comment type="subcellular location">
    <subcellularLocation>
        <location evidence="1">Cytoplasm</location>
    </subcellularLocation>
</comment>
<comment type="similarity">
    <text evidence="2">Belongs to the class-I aminoacyl-tRNA synthetase family.</text>
</comment>
<evidence type="ECO:0000250" key="1"/>
<evidence type="ECO:0000305" key="2"/>
<proteinExistence type="inferred from homology"/>
<keyword id="KW-0030">Aminoacyl-tRNA synthetase</keyword>
<keyword id="KW-0067">ATP-binding</keyword>
<keyword id="KW-0963">Cytoplasm</keyword>
<keyword id="KW-0436">Ligase</keyword>
<keyword id="KW-0479">Metal-binding</keyword>
<keyword id="KW-0547">Nucleotide-binding</keyword>
<keyword id="KW-0648">Protein biosynthesis</keyword>
<keyword id="KW-1185">Reference proteome</keyword>
<keyword id="KW-0862">Zinc</keyword>
<protein>
    <recommendedName>
        <fullName>Cysteine--tRNA ligase</fullName>
        <ecNumber>6.1.1.16</ecNumber>
    </recommendedName>
    <alternativeName>
        <fullName>Cysteinyl-tRNA synthetase</fullName>
        <shortName>CysRS</shortName>
    </alternativeName>
</protein>
<organism>
    <name type="scientific">Thermotoga maritima (strain ATCC 43589 / DSM 3109 / JCM 10099 / NBRC 100826 / MSB8)</name>
    <dbReference type="NCBI Taxonomy" id="243274"/>
    <lineage>
        <taxon>Bacteria</taxon>
        <taxon>Thermotogati</taxon>
        <taxon>Thermotogota</taxon>
        <taxon>Thermotogae</taxon>
        <taxon>Thermotogales</taxon>
        <taxon>Thermotogaceae</taxon>
        <taxon>Thermotoga</taxon>
    </lineage>
</organism>
<reference key="1">
    <citation type="journal article" date="1999" name="Nature">
        <title>Evidence for lateral gene transfer between Archaea and Bacteria from genome sequence of Thermotoga maritima.</title>
        <authorList>
            <person name="Nelson K.E."/>
            <person name="Clayton R.A."/>
            <person name="Gill S.R."/>
            <person name="Gwinn M.L."/>
            <person name="Dodson R.J."/>
            <person name="Haft D.H."/>
            <person name="Hickey E.K."/>
            <person name="Peterson J.D."/>
            <person name="Nelson W.C."/>
            <person name="Ketchum K.A."/>
            <person name="McDonald L.A."/>
            <person name="Utterback T.R."/>
            <person name="Malek J.A."/>
            <person name="Linher K.D."/>
            <person name="Garrett M.M."/>
            <person name="Stewart A.M."/>
            <person name="Cotton M.D."/>
            <person name="Pratt M.S."/>
            <person name="Phillips C.A."/>
            <person name="Richardson D.L."/>
            <person name="Heidelberg J.F."/>
            <person name="Sutton G.G."/>
            <person name="Fleischmann R.D."/>
            <person name="Eisen J.A."/>
            <person name="White O."/>
            <person name="Salzberg S.L."/>
            <person name="Smith H.O."/>
            <person name="Venter J.C."/>
            <person name="Fraser C.M."/>
        </authorList>
    </citation>
    <scope>NUCLEOTIDE SEQUENCE [LARGE SCALE GENOMIC DNA]</scope>
    <source>
        <strain>ATCC 43589 / DSM 3109 / JCM 10099 / NBRC 100826 / MSB8</strain>
    </source>
</reference>
<name>SYC_THEMA</name>